<reference key="1">
    <citation type="journal article" date="2016" name="Genome Announc.">
        <title>Draft genome sequences of fungus Aspergillus calidoustus.</title>
        <authorList>
            <person name="Horn F."/>
            <person name="Linde J."/>
            <person name="Mattern D.J."/>
            <person name="Walther G."/>
            <person name="Guthke R."/>
            <person name="Scherlach K."/>
            <person name="Martin K."/>
            <person name="Brakhage A.A."/>
            <person name="Petzke L."/>
            <person name="Valiante V."/>
        </authorList>
    </citation>
    <scope>NUCLEOTIDE SEQUENCE [LARGE SCALE GENOMIC DNA]</scope>
    <source>
        <strain>SF006504</strain>
    </source>
</reference>
<reference key="2">
    <citation type="journal article" date="2017" name="ACS Chem. Biol.">
        <title>Discovery of an Extended Austinoid Biosynthetic Pathway in Aspergillus calidoustus.</title>
        <authorList>
            <person name="Valiante V."/>
            <person name="Mattern D.J."/>
            <person name="Schueffler A."/>
            <person name="Horn F."/>
            <person name="Walther G."/>
            <person name="Scherlach K."/>
            <person name="Petzke L."/>
            <person name="Dickhaut J."/>
            <person name="Guthke R."/>
            <person name="Hertweck C."/>
            <person name="Nett M."/>
            <person name="Thines E."/>
            <person name="Brakhage A.A."/>
        </authorList>
    </citation>
    <scope>FUNCTION</scope>
    <scope>PATHWAY</scope>
</reference>
<reference key="3">
    <citation type="journal article" date="2017" name="ACS Chem. Biol.">
        <title>Rewiring of the austinoid biosynthetic pathway in filamentous fungi.</title>
        <authorList>
            <person name="Mattern D.J."/>
            <person name="Valiante V."/>
            <person name="Horn F."/>
            <person name="Petzke L."/>
            <person name="Brakhage A.A."/>
        </authorList>
    </citation>
    <scope>FUNCTION</scope>
</reference>
<protein>
    <recommendedName>
        <fullName evidence="4">Austinoid biosynthesis cluster protein H</fullName>
    </recommendedName>
</protein>
<feature type="chain" id="PRO_0000453830" description="Austinoid biosynthesis cluster protein H">
    <location>
        <begin position="1"/>
        <end position="147"/>
    </location>
</feature>
<gene>
    <name evidence="4" type="primary">ausH</name>
    <name type="ORF">ASPCAL14357</name>
</gene>
<proteinExistence type="inferred from homology"/>
<dbReference type="EMBL" id="CDMC01000024">
    <property type="protein sequence ID" value="CEL11254.1"/>
    <property type="molecule type" value="Genomic_DNA"/>
</dbReference>
<dbReference type="SMR" id="A0A0U5GHC1"/>
<dbReference type="STRING" id="454130.A0A0U5GHC1"/>
<dbReference type="OMA" id="TDIGPYA"/>
<dbReference type="OrthoDB" id="3758478at2759"/>
<dbReference type="UniPathway" id="UPA00213"/>
<dbReference type="Proteomes" id="UP000054771">
    <property type="component" value="Unassembled WGS sequence"/>
</dbReference>
<dbReference type="GO" id="GO:0016114">
    <property type="term" value="P:terpenoid biosynthetic process"/>
    <property type="evidence" value="ECO:0007669"/>
    <property type="project" value="UniProtKB-UniPathway"/>
</dbReference>
<dbReference type="Gene3D" id="3.10.450.50">
    <property type="match status" value="1"/>
</dbReference>
<dbReference type="InterPro" id="IPR050977">
    <property type="entry name" value="Fungal_Meroterpenoid_Isomerase"/>
</dbReference>
<dbReference type="InterPro" id="IPR032710">
    <property type="entry name" value="NTF2-like_dom_sf"/>
</dbReference>
<dbReference type="PANTHER" id="PTHR39598:SF1">
    <property type="entry name" value="AUSTINOID BIOSYNTHESIS CLUSTERS PROTEIN F-RELATED"/>
    <property type="match status" value="1"/>
</dbReference>
<dbReference type="PANTHER" id="PTHR39598">
    <property type="entry name" value="AUSTINOL SYNTHESIS PROTEIN F-RELATED"/>
    <property type="match status" value="1"/>
</dbReference>
<dbReference type="SUPFAM" id="SSF54427">
    <property type="entry name" value="NTF2-like"/>
    <property type="match status" value="1"/>
</dbReference>
<evidence type="ECO:0000250" key="1">
    <source>
        <dbReference type="UniProtKB" id="Q5AR31"/>
    </source>
</evidence>
<evidence type="ECO:0000269" key="2">
    <source>
    </source>
</evidence>
<evidence type="ECO:0000269" key="3">
    <source>
    </source>
</evidence>
<evidence type="ECO:0000303" key="4">
    <source>
    </source>
</evidence>
<evidence type="ECO:0000305" key="5"/>
<evidence type="ECO:0000305" key="6">
    <source>
    </source>
</evidence>
<evidence type="ECO:0000305" key="7">
    <source>
    </source>
</evidence>
<keyword id="KW-1185">Reference proteome</keyword>
<organism>
    <name type="scientific">Aspergillus calidoustus</name>
    <dbReference type="NCBI Taxonomy" id="454130"/>
    <lineage>
        <taxon>Eukaryota</taxon>
        <taxon>Fungi</taxon>
        <taxon>Dikarya</taxon>
        <taxon>Ascomycota</taxon>
        <taxon>Pezizomycotina</taxon>
        <taxon>Eurotiomycetes</taxon>
        <taxon>Eurotiomycetidae</taxon>
        <taxon>Eurotiales</taxon>
        <taxon>Aspergillaceae</taxon>
        <taxon>Aspergillus</taxon>
        <taxon>Aspergillus subgen. Nidulantes</taxon>
    </lineage>
</organism>
<sequence length="147" mass="16642">MPPTREELVSTALNFIAQFAKLDVDSVLSFLSPNCTLRSFPSSLGKPALQTKEESKADFQGLKDFFQNFQLRVKDGSEPVVDEPARRVVLHIEGKGDSLVGRFETEYIYILRMNEEGTMVEDFFQFADSATRDAWGKKIEAHFSARN</sequence>
<comment type="function">
    <text evidence="1 2 3">Part of the gene cluster that mediates the biosynthesis of calidodehydroaustin, a fungal meroterpenoid (PubMed:28233494, PubMed:29076725). The first step of the pathway is the synthesis of 3,5-dimethylorsellinic acid by the polyketide synthase ausA (PubMed:28233494). 3,5-dimethylorsellinic acid is then prenylated by the polyprenyl transferase ausN (PubMed:28233494). Further epoxidation by the FAD-dependent monooxygenase ausM and cyclization by the probable terpene cyclase ausL lead to the formation of protoaustinoid A (By similarity). Protoaustinoid A is then oxidized to spiro-lactone preaustinoid A3 by the combined action of the FAD-binding monooxygenases ausB and ausC, and the dioxygenase ausE (By similarity). Acid-catalyzed keto-rearrangement and ring contraction of the tetraketide portion of preaustinoid A3 by ausJ lead to the formation of preaustinoid A4 (By similarity). The aldo-keto reductase ausK, with the help of ausH, is involved in the next step by transforming preaustinoid A4 into isoaustinone which is in turn hydroxylated by the P450 monooxygenase ausI to form austinolide (By similarity). The cytochrome P450 monooxygenase ausG modifies austinolide to austinol (By similarity). Austinol is further acetylated to austin by the O-acetyltransferase ausP, which spontaneously changes to dehydroaustin (PubMed:28233494). The cytochrome P450 monooxygenase ausR then converts dehydroaustin is into 7-dehydrodehydroaustin (PubMed:28233494). The hydroxylation catalyzed by ausR permits the O-acetyltransferase ausQ to add an additional acetyl group to the molecule, leading to the formation of acetoxydehydroaustin (PubMed:28233494). The short chain dehydrogenase ausT catalyzes the reduction of the double bond present between carbon atoms 1 and 2 to convert 7-dehydrodehydroaustin into 1,2-dihydro-7-hydroxydehydroaustin (PubMed:28233494). AusQ catalyzes not only an acetylation reaction but also the addition of the PKS ausV diketide product to 1,2-dihydro-7-hydroxydehydroaustin, forming precalidodehydroaustin (PubMed:28233494). Finally, the iron/alpha-ketoglutarate-dependent dioxygenase converts precalidodehydroaustin into calidodehydroaustin (PubMed:28233494).</text>
</comment>
<comment type="pathway">
    <text evidence="6">Secondary metabolite biosynthesis; terpenoid biosynthesis.</text>
</comment>
<comment type="subunit">
    <text evidence="1">Homodimer.</text>
</comment>
<comment type="miscellaneous">
    <text evidence="7">In A.calidoustus, the austinoid gene cluster lies on a contiguous DNA region, while clusters from E.nidulans and P.brasilianum are split in their respective genomes. Genetic rearrangements provoked variability among the clusters and E.nidulans produces the least number of austionoid derivatives with the end products austinol and dehydroaustinol, while P.brasilianum can produce until acetoxydehydroaustin, and A.calidoustus produces the highest number of identified derivatives.</text>
</comment>
<comment type="similarity">
    <text evidence="5">Belongs to the trt14 isomerase family.</text>
</comment>
<accession>A0A0U5GHC1</accession>
<name>AUSH_ASPCI</name>